<reference key="1">
    <citation type="journal article" date="1997" name="Microbiology">
        <title>Cloning, analysis and one-step disruption of the ARG5,6 gene of Candida albicans.</title>
        <authorList>
            <person name="Negredo A."/>
            <person name="Monteoliva L."/>
            <person name="Gil C."/>
            <person name="Pla J."/>
            <person name="Nombela C."/>
        </authorList>
    </citation>
    <scope>NUCLEOTIDE SEQUENCE [GENOMIC DNA]</scope>
    <source>
        <strain>ATCC 64385 / 1001</strain>
    </source>
</reference>
<keyword id="KW-0028">Amino-acid biosynthesis</keyword>
<keyword id="KW-0055">Arginine biosynthesis</keyword>
<keyword id="KW-0067">ATP-binding</keyword>
<keyword id="KW-0418">Kinase</keyword>
<keyword id="KW-0496">Mitochondrion</keyword>
<keyword id="KW-0511">Multifunctional enzyme</keyword>
<keyword id="KW-0521">NADP</keyword>
<keyword id="KW-0547">Nucleotide-binding</keyword>
<keyword id="KW-0560">Oxidoreductase</keyword>
<keyword id="KW-0808">Transferase</keyword>
<keyword id="KW-0809">Transit peptide</keyword>
<protein>
    <recommendedName>
        <fullName>Protein ARG5,6, mitochondrial</fullName>
    </recommendedName>
    <component>
        <recommendedName>
            <fullName>N-acetyl-gamma-glutamyl-phosphate reductase</fullName>
            <ecNumber>1.2.1.38</ecNumber>
        </recommendedName>
        <alternativeName>
            <fullName>N-acetyl-glutamate semialdehyde dehydrogenase</fullName>
            <shortName>NAGSA dehydrogenase</shortName>
        </alternativeName>
    </component>
    <component>
        <recommendedName>
            <fullName>Acetylglutamate kinase</fullName>
            <ecNumber>2.7.2.8</ecNumber>
        </recommendedName>
        <alternativeName>
            <fullName>N-acetyl-L-glutamate 5-phosphotransferase</fullName>
        </alternativeName>
        <alternativeName>
            <fullName>NAG kinase</fullName>
            <shortName>AGK</shortName>
        </alternativeName>
    </component>
</protein>
<dbReference type="EC" id="1.2.1.38"/>
<dbReference type="EC" id="2.7.2.8"/>
<dbReference type="EMBL" id="X98880">
    <property type="protein sequence ID" value="CAA67383.1"/>
    <property type="molecule type" value="Genomic_DNA"/>
</dbReference>
<dbReference type="SMR" id="P78586"/>
<dbReference type="VEuPathDB" id="FungiDB:C1_09290C_A"/>
<dbReference type="VEuPathDB" id="FungiDB:CAWG_00500"/>
<dbReference type="UniPathway" id="UPA00068">
    <property type="reaction ID" value="UER00107"/>
</dbReference>
<dbReference type="UniPathway" id="UPA00068">
    <property type="reaction ID" value="UER00108"/>
</dbReference>
<dbReference type="GO" id="GO:0005759">
    <property type="term" value="C:mitochondrial matrix"/>
    <property type="evidence" value="ECO:0007669"/>
    <property type="project" value="EnsemblFungi"/>
</dbReference>
<dbReference type="GO" id="GO:0003991">
    <property type="term" value="F:acetylglutamate kinase activity"/>
    <property type="evidence" value="ECO:0007669"/>
    <property type="project" value="UniProtKB-EC"/>
</dbReference>
<dbReference type="GO" id="GO:0005524">
    <property type="term" value="F:ATP binding"/>
    <property type="evidence" value="ECO:0007669"/>
    <property type="project" value="UniProtKB-KW"/>
</dbReference>
<dbReference type="GO" id="GO:0003942">
    <property type="term" value="F:N-acetyl-gamma-glutamyl-phosphate reductase activity"/>
    <property type="evidence" value="ECO:0007669"/>
    <property type="project" value="UniProtKB-EC"/>
</dbReference>
<dbReference type="GO" id="GO:0051287">
    <property type="term" value="F:NAD binding"/>
    <property type="evidence" value="ECO:0007669"/>
    <property type="project" value="InterPro"/>
</dbReference>
<dbReference type="GO" id="GO:0070401">
    <property type="term" value="F:NADP+ binding"/>
    <property type="evidence" value="ECO:0007669"/>
    <property type="project" value="InterPro"/>
</dbReference>
<dbReference type="GO" id="GO:0042450">
    <property type="term" value="P:arginine biosynthetic process via ornithine"/>
    <property type="evidence" value="ECO:0007669"/>
    <property type="project" value="EnsemblFungi"/>
</dbReference>
<dbReference type="GO" id="GO:0006526">
    <property type="term" value="P:L-arginine biosynthetic process"/>
    <property type="evidence" value="ECO:0007669"/>
    <property type="project" value="UniProtKB-UniPathway"/>
</dbReference>
<dbReference type="CDD" id="cd04252">
    <property type="entry name" value="AAK_NAGK-fArgBP"/>
    <property type="match status" value="1"/>
</dbReference>
<dbReference type="CDD" id="cd23936">
    <property type="entry name" value="AGPR_C_ARG5_6_like"/>
    <property type="match status" value="1"/>
</dbReference>
<dbReference type="CDD" id="cd24149">
    <property type="entry name" value="AGPR_N_ARG5_6_like"/>
    <property type="match status" value="1"/>
</dbReference>
<dbReference type="CDD" id="cd04263">
    <property type="entry name" value="DUF619-NAGK-FABP"/>
    <property type="match status" value="1"/>
</dbReference>
<dbReference type="FunFam" id="3.30.360.10:FF:000019">
    <property type="entry name" value="Bifunctional acetylglutamate kinase/N-acetyl-gamma-glutamyl-phosphate reductase"/>
    <property type="match status" value="1"/>
</dbReference>
<dbReference type="FunFam" id="3.40.630.30:FF:000029">
    <property type="entry name" value="Bifunctional acetylglutamate kinase/N-acetyl-gamma-glutamyl-phosphate reductase"/>
    <property type="match status" value="1"/>
</dbReference>
<dbReference type="FunFam" id="3.40.1160.10:FF:000011">
    <property type="entry name" value="N-acetyl-gamma-glutamyl-phosphate reductase, variant"/>
    <property type="match status" value="1"/>
</dbReference>
<dbReference type="Gene3D" id="3.40.630.30">
    <property type="match status" value="1"/>
</dbReference>
<dbReference type="Gene3D" id="3.40.1160.10">
    <property type="entry name" value="Acetylglutamate kinase-like"/>
    <property type="match status" value="1"/>
</dbReference>
<dbReference type="Gene3D" id="3.30.360.10">
    <property type="entry name" value="Dihydrodipicolinate Reductase, domain 2"/>
    <property type="match status" value="1"/>
</dbReference>
<dbReference type="Gene3D" id="3.40.50.720">
    <property type="entry name" value="NAD(P)-binding Rossmann-like Domain"/>
    <property type="match status" value="1"/>
</dbReference>
<dbReference type="HAMAP" id="MF_00150">
    <property type="entry name" value="ArgC_type1"/>
    <property type="match status" value="1"/>
</dbReference>
<dbReference type="InterPro" id="IPR036393">
    <property type="entry name" value="AceGlu_kinase-like_sf"/>
</dbReference>
<dbReference type="InterPro" id="IPR004662">
    <property type="entry name" value="AcgluKinase_fam"/>
</dbReference>
<dbReference type="InterPro" id="IPR023013">
    <property type="entry name" value="AGPR_AS"/>
</dbReference>
<dbReference type="InterPro" id="IPR000706">
    <property type="entry name" value="AGPR_type-1"/>
</dbReference>
<dbReference type="InterPro" id="IPR001048">
    <property type="entry name" value="Asp/Glu/Uridylate_kinase"/>
</dbReference>
<dbReference type="InterPro" id="IPR036291">
    <property type="entry name" value="NAD(P)-bd_dom_sf"/>
</dbReference>
<dbReference type="InterPro" id="IPR041734">
    <property type="entry name" value="NAGK-fArgBP"/>
</dbReference>
<dbReference type="InterPro" id="IPR011241">
    <property type="entry name" value="NAGK/NAGSA"/>
</dbReference>
<dbReference type="InterPro" id="IPR000534">
    <property type="entry name" value="Semialdehyde_DH_NAD-bd"/>
</dbReference>
<dbReference type="InterPro" id="IPR006855">
    <property type="entry name" value="Vertebrate-like_GNAT_dom"/>
</dbReference>
<dbReference type="NCBIfam" id="TIGR00761">
    <property type="entry name" value="argB"/>
    <property type="match status" value="1"/>
</dbReference>
<dbReference type="NCBIfam" id="TIGR01850">
    <property type="entry name" value="argC"/>
    <property type="match status" value="1"/>
</dbReference>
<dbReference type="PANTHER" id="PTHR23342">
    <property type="entry name" value="N-ACETYLGLUTAMATE SYNTHASE"/>
    <property type="match status" value="1"/>
</dbReference>
<dbReference type="PANTHER" id="PTHR23342:SF0">
    <property type="entry name" value="N-ACETYLGLUTAMATE SYNTHASE, MITOCHONDRIAL"/>
    <property type="match status" value="1"/>
</dbReference>
<dbReference type="Pfam" id="PF00696">
    <property type="entry name" value="AA_kinase"/>
    <property type="match status" value="1"/>
</dbReference>
<dbReference type="Pfam" id="PF04768">
    <property type="entry name" value="NAT"/>
    <property type="match status" value="1"/>
</dbReference>
<dbReference type="Pfam" id="PF01118">
    <property type="entry name" value="Semialdhyde_dh"/>
    <property type="match status" value="1"/>
</dbReference>
<dbReference type="Pfam" id="PF22698">
    <property type="entry name" value="Semialdhyde_dhC_1"/>
    <property type="match status" value="1"/>
</dbReference>
<dbReference type="PIRSF" id="PIRSF036440">
    <property type="entry name" value="ARG5-6"/>
    <property type="match status" value="1"/>
</dbReference>
<dbReference type="SMART" id="SM00859">
    <property type="entry name" value="Semialdhyde_dh"/>
    <property type="match status" value="1"/>
</dbReference>
<dbReference type="SUPFAM" id="SSF53633">
    <property type="entry name" value="Carbamate kinase-like"/>
    <property type="match status" value="1"/>
</dbReference>
<dbReference type="SUPFAM" id="SSF55347">
    <property type="entry name" value="Glyceraldehyde-3-phosphate dehydrogenase-like, C-terminal domain"/>
    <property type="match status" value="1"/>
</dbReference>
<dbReference type="SUPFAM" id="SSF51735">
    <property type="entry name" value="NAD(P)-binding Rossmann-fold domains"/>
    <property type="match status" value="1"/>
</dbReference>
<dbReference type="PROSITE" id="PS01224">
    <property type="entry name" value="ARGC"/>
    <property type="match status" value="1"/>
</dbReference>
<dbReference type="PROSITE" id="PS51731">
    <property type="entry name" value="GNAT_NAGS"/>
    <property type="match status" value="1"/>
</dbReference>
<feature type="transit peptide" description="Mitochondrion" evidence="1">
    <location>
        <begin position="1"/>
        <end status="unknown"/>
    </location>
</feature>
<feature type="chain" id="PRO_0000002067" description="Acetylglutamate kinase">
    <location>
        <begin status="unknown"/>
        <end position="529" status="uncertain"/>
    </location>
</feature>
<feature type="chain" id="PRO_0000002068" description="N-acetyl-gamma-glutamyl-phosphate reductase">
    <location>
        <begin position="530" status="uncertain"/>
        <end position="857"/>
    </location>
</feature>
<feature type="domain" description="N-acetyltransferase" evidence="2">
    <location>
        <begin position="341"/>
        <end position="492"/>
    </location>
</feature>
<feature type="region of interest" description="Disordered" evidence="4">
    <location>
        <begin position="509"/>
        <end position="532"/>
    </location>
</feature>
<feature type="active site" evidence="3">
    <location>
        <position position="669"/>
    </location>
</feature>
<organism>
    <name type="scientific">Candida albicans</name>
    <name type="common">Yeast</name>
    <dbReference type="NCBI Taxonomy" id="5476"/>
    <lineage>
        <taxon>Eukaryota</taxon>
        <taxon>Fungi</taxon>
        <taxon>Dikarya</taxon>
        <taxon>Ascomycota</taxon>
        <taxon>Saccharomycotina</taxon>
        <taxon>Pichiomycetes</taxon>
        <taxon>Debaryomycetaceae</taxon>
        <taxon>Candida/Lodderomyces clade</taxon>
        <taxon>Candida</taxon>
    </lineage>
</organism>
<comment type="catalytic activity">
    <reaction>
        <text>N-acetyl-L-glutamate 5-semialdehyde + phosphate + NADP(+) = N-acetyl-L-glutamyl 5-phosphate + NADPH + H(+)</text>
        <dbReference type="Rhea" id="RHEA:21588"/>
        <dbReference type="ChEBI" id="CHEBI:15378"/>
        <dbReference type="ChEBI" id="CHEBI:29123"/>
        <dbReference type="ChEBI" id="CHEBI:43474"/>
        <dbReference type="ChEBI" id="CHEBI:57783"/>
        <dbReference type="ChEBI" id="CHEBI:57936"/>
        <dbReference type="ChEBI" id="CHEBI:58349"/>
        <dbReference type="EC" id="1.2.1.38"/>
    </reaction>
</comment>
<comment type="catalytic activity">
    <reaction>
        <text>N-acetyl-L-glutamate + ATP = N-acetyl-L-glutamyl 5-phosphate + ADP</text>
        <dbReference type="Rhea" id="RHEA:14629"/>
        <dbReference type="ChEBI" id="CHEBI:30616"/>
        <dbReference type="ChEBI" id="CHEBI:44337"/>
        <dbReference type="ChEBI" id="CHEBI:57936"/>
        <dbReference type="ChEBI" id="CHEBI:456216"/>
        <dbReference type="EC" id="2.7.2.8"/>
    </reaction>
</comment>
<comment type="pathway">
    <text>Amino-acid biosynthesis; L-arginine biosynthesis; N(2)-acetyl-L-ornithine from L-glutamate: step 2/4.</text>
</comment>
<comment type="pathway">
    <text>Amino-acid biosynthesis; L-arginine biosynthesis; N(2)-acetyl-L-ornithine from L-glutamate: step 3/4.</text>
</comment>
<comment type="subcellular location">
    <subcellularLocation>
        <location>Mitochondrion</location>
    </subcellularLocation>
</comment>
<comment type="similarity">
    <text evidence="5">In the N-terminal section; belongs to the acetylglutamate kinase family.</text>
</comment>
<comment type="similarity">
    <text evidence="5">In the C-terminal section; belongs to the NAGSA dehydrogenase family.</text>
</comment>
<gene>
    <name type="primary">ARG5,6</name>
</gene>
<name>ARG56_CANAX</name>
<accession>P78586</accession>
<proteinExistence type="inferred from homology"/>
<evidence type="ECO:0000255" key="1"/>
<evidence type="ECO:0000255" key="2">
    <source>
        <dbReference type="PROSITE-ProRule" id="PRU00532"/>
    </source>
</evidence>
<evidence type="ECO:0000255" key="3">
    <source>
        <dbReference type="PROSITE-ProRule" id="PRU10010"/>
    </source>
</evidence>
<evidence type="ECO:0000256" key="4">
    <source>
        <dbReference type="SAM" id="MobiDB-lite"/>
    </source>
</evidence>
<evidence type="ECO:0000305" key="5"/>
<sequence>MIRQVNKKAISNSLFKRLSLSGSAFANITANKKSSTHQLNQKTQLANVRFYSTKSTVIQLLNNIGSKREVEQYLKYFTSVSQQQFAVIKVGGAIITQQLNELASCLAFLYHVGLYPIVLHGTGPQINELLENEGVEPEYIDGIRITNPKTMEVVRKCFLEQNLRLVTALEKIGVHARPITAGVFEAEYLDKDKYQLVGKITSVNKSPVEAAINSGYLPILTSLAETSSGQLLNVNADVAAGELAREFEPLKIVYLNEKGGIINGNTGEKVSAINLDEEYEDLLKESWVKYGTKLKIKEIHDLLQHLPRSSSVAIIDVNDLQKELFTDSGAGTLIRRGYRLINRNSLRDFGNPDLLRNALLRDPEIKTGKVSVASYLKFLDSVQFKSYGDEPLEVLAIVVEQNDKIPKLDEFLSSKTGWLNNVTDNIFNAIKKDYSQLCWVVNENDANLPWYFSKSDGSFAKNGQILFWYGLNIDEASKLIKEFDSSSIGSSLSSSKESGVFTSAQQKRGFHHSTVRRNTNPNPPLSEGKQTERKKVALIGARGYTGQNLIKLIDNHPYLDISYVSSRELEGQKLQGYNKDNIVYSNLQIEDIKRLEENNEVDVWVMALPNGVCKPFVDTIDLVQNPNSKIVDLSADYRFDTTGEWTYGLPELNDRKTIAQAKKISNPGCYATAAQVAIAPLKEYISGTPSIFGVSGYSGAGTKPSPKNDVNLLSNNLIPYSLTDHVHEKEISSQLGLQVAFTPHVAQWFQGITHTINIPIKKGSLTSREIRNIYQDRYQGEKLITISGEAPLVKDISGKHGVVVGGFAVNSNEDRVVIVATIDNLLKGAATQCLQNINLSQEFGEYDGIPTESLIRG</sequence>